<reference key="1">
    <citation type="journal article" date="2002" name="J. Bacteriol.">
        <title>Whole-genome comparison of Mycobacterium tuberculosis clinical and laboratory strains.</title>
        <authorList>
            <person name="Fleischmann R.D."/>
            <person name="Alland D."/>
            <person name="Eisen J.A."/>
            <person name="Carpenter L."/>
            <person name="White O."/>
            <person name="Peterson J.D."/>
            <person name="DeBoy R.T."/>
            <person name="Dodson R.J."/>
            <person name="Gwinn M.L."/>
            <person name="Haft D.H."/>
            <person name="Hickey E.K."/>
            <person name="Kolonay J.F."/>
            <person name="Nelson W.C."/>
            <person name="Umayam L.A."/>
            <person name="Ermolaeva M.D."/>
            <person name="Salzberg S.L."/>
            <person name="Delcher A."/>
            <person name="Utterback T.R."/>
            <person name="Weidman J.F."/>
            <person name="Khouri H.M."/>
            <person name="Gill J."/>
            <person name="Mikula A."/>
            <person name="Bishai W."/>
            <person name="Jacobs W.R. Jr."/>
            <person name="Venter J.C."/>
            <person name="Fraser C.M."/>
        </authorList>
    </citation>
    <scope>NUCLEOTIDE SEQUENCE [LARGE SCALE GENOMIC DNA]</scope>
    <source>
        <strain>CDC 1551 / Oshkosh</strain>
    </source>
</reference>
<evidence type="ECO:0000250" key="1"/>
<proteinExistence type="inferred from homology"/>
<gene>
    <name type="primary">mbtH</name>
    <name type="ordered locus">MT2445.1</name>
</gene>
<comment type="function">
    <text evidence="1">Could be involved in mycobactin synthesis.</text>
</comment>
<keyword id="KW-1185">Reference proteome</keyword>
<name>MBTH_MYCTO</name>
<feature type="chain" id="PRO_0000427969" description="Protein MbtH">
    <location>
        <begin position="1"/>
        <end position="71"/>
    </location>
</feature>
<dbReference type="EMBL" id="AE000516">
    <property type="protein sequence ID" value="AAK46740.1"/>
    <property type="molecule type" value="Genomic_DNA"/>
</dbReference>
<dbReference type="PIR" id="H70587">
    <property type="entry name" value="H70587"/>
</dbReference>
<dbReference type="RefSeq" id="WP_003412265.1">
    <property type="nucleotide sequence ID" value="NZ_KK341227.1"/>
</dbReference>
<dbReference type="BMRB" id="P9WIP4"/>
<dbReference type="SMR" id="P9WIP4"/>
<dbReference type="GeneID" id="45426362"/>
<dbReference type="KEGG" id="mtc:MT2445.1"/>
<dbReference type="PATRIC" id="fig|83331.31.peg.2636"/>
<dbReference type="HOGENOM" id="CLU_181321_1_0_11"/>
<dbReference type="Proteomes" id="UP000001020">
    <property type="component" value="Chromosome"/>
</dbReference>
<dbReference type="GO" id="GO:0005829">
    <property type="term" value="C:cytosol"/>
    <property type="evidence" value="ECO:0007669"/>
    <property type="project" value="TreeGrafter"/>
</dbReference>
<dbReference type="GO" id="GO:0019290">
    <property type="term" value="P:siderophore biosynthetic process"/>
    <property type="evidence" value="ECO:0007669"/>
    <property type="project" value="TreeGrafter"/>
</dbReference>
<dbReference type="FunFam" id="3.90.820.10:FF:000002">
    <property type="entry name" value="MbtH family protein"/>
    <property type="match status" value="1"/>
</dbReference>
<dbReference type="Gene3D" id="3.90.820.10">
    <property type="entry name" value="Structural Genomics, Unknown Function 30-nov-00 1gh9 Mol_id"/>
    <property type="match status" value="1"/>
</dbReference>
<dbReference type="InterPro" id="IPR005153">
    <property type="entry name" value="MbtH-like_dom"/>
</dbReference>
<dbReference type="InterPro" id="IPR038020">
    <property type="entry name" value="MbtH-like_sf"/>
</dbReference>
<dbReference type="InterPro" id="IPR037407">
    <property type="entry name" value="MLP_fam"/>
</dbReference>
<dbReference type="PANTHER" id="PTHR38444">
    <property type="entry name" value="ENTEROBACTIN BIOSYNTHESIS PROTEIN YBDZ"/>
    <property type="match status" value="1"/>
</dbReference>
<dbReference type="PANTHER" id="PTHR38444:SF1">
    <property type="entry name" value="ENTEROBACTIN BIOSYNTHESIS PROTEIN YBDZ"/>
    <property type="match status" value="1"/>
</dbReference>
<dbReference type="Pfam" id="PF03621">
    <property type="entry name" value="MbtH"/>
    <property type="match status" value="1"/>
</dbReference>
<dbReference type="SMART" id="SM00923">
    <property type="entry name" value="MbtH"/>
    <property type="match status" value="1"/>
</dbReference>
<dbReference type="SUPFAM" id="SSF160582">
    <property type="entry name" value="MbtH-like"/>
    <property type="match status" value="1"/>
</dbReference>
<protein>
    <recommendedName>
        <fullName>Protein MbtH</fullName>
    </recommendedName>
</protein>
<sequence length="71" mass="8054">MSTNPFDDDNGAFFVLVNDEDQHSLWPVFADIPAGWRVVHGEASRAACLDYVEKNWTDLRPKSLRDAMAED</sequence>
<accession>P9WIP4</accession>
<accession>L0T9M5</accession>
<accession>O05821</accession>
<organism>
    <name type="scientific">Mycobacterium tuberculosis (strain CDC 1551 / Oshkosh)</name>
    <dbReference type="NCBI Taxonomy" id="83331"/>
    <lineage>
        <taxon>Bacteria</taxon>
        <taxon>Bacillati</taxon>
        <taxon>Actinomycetota</taxon>
        <taxon>Actinomycetes</taxon>
        <taxon>Mycobacteriales</taxon>
        <taxon>Mycobacteriaceae</taxon>
        <taxon>Mycobacterium</taxon>
        <taxon>Mycobacterium tuberculosis complex</taxon>
    </lineage>
</organism>